<comment type="function">
    <text evidence="1">Involved in the anomeric conversion of L-fucose.</text>
</comment>
<comment type="catalytic activity">
    <reaction evidence="1">
        <text>alpha-L-fucose = beta-L-fucose</text>
        <dbReference type="Rhea" id="RHEA:25580"/>
        <dbReference type="ChEBI" id="CHEBI:42548"/>
        <dbReference type="ChEBI" id="CHEBI:42589"/>
        <dbReference type="EC" id="5.1.3.29"/>
    </reaction>
</comment>
<comment type="pathway">
    <text evidence="1">Carbohydrate metabolism; L-fucose metabolism.</text>
</comment>
<comment type="subunit">
    <text evidence="1">Homodecamer.</text>
</comment>
<comment type="subcellular location">
    <subcellularLocation>
        <location evidence="1">Cytoplasm</location>
    </subcellularLocation>
</comment>
<comment type="similarity">
    <text evidence="1">Belongs to the RbsD / FucU family. FucU mutarotase subfamily.</text>
</comment>
<protein>
    <recommendedName>
        <fullName evidence="1">L-fucose mutarotase</fullName>
        <ecNumber evidence="1">5.1.3.29</ecNumber>
    </recommendedName>
    <alternativeName>
        <fullName evidence="1">Fucose 1-epimerase</fullName>
    </alternativeName>
    <alternativeName>
        <fullName evidence="1">Type-2 mutarotase</fullName>
    </alternativeName>
</protein>
<name>FUCM_ECO55</name>
<dbReference type="EC" id="5.1.3.29" evidence="1"/>
<dbReference type="EMBL" id="CU928145">
    <property type="protein sequence ID" value="CAU98980.1"/>
    <property type="molecule type" value="Genomic_DNA"/>
</dbReference>
<dbReference type="RefSeq" id="WP_000920840.1">
    <property type="nucleotide sequence ID" value="NZ_CP028304.1"/>
</dbReference>
<dbReference type="SMR" id="B7LEY4"/>
<dbReference type="GeneID" id="93779194"/>
<dbReference type="KEGG" id="eck:EC55989_3083"/>
<dbReference type="HOGENOM" id="CLU_120075_1_0_6"/>
<dbReference type="UniPathway" id="UPA00956"/>
<dbReference type="Proteomes" id="UP000000746">
    <property type="component" value="Chromosome"/>
</dbReference>
<dbReference type="GO" id="GO:0005737">
    <property type="term" value="C:cytoplasm"/>
    <property type="evidence" value="ECO:0007669"/>
    <property type="project" value="UniProtKB-SubCell"/>
</dbReference>
<dbReference type="GO" id="GO:0042806">
    <property type="term" value="F:fucose binding"/>
    <property type="evidence" value="ECO:0007669"/>
    <property type="project" value="InterPro"/>
</dbReference>
<dbReference type="GO" id="GO:0036373">
    <property type="term" value="F:L-fucose mutarotase activity"/>
    <property type="evidence" value="ECO:0007669"/>
    <property type="project" value="UniProtKB-EC"/>
</dbReference>
<dbReference type="GO" id="GO:0036065">
    <property type="term" value="P:fucosylation"/>
    <property type="evidence" value="ECO:0007669"/>
    <property type="project" value="TreeGrafter"/>
</dbReference>
<dbReference type="GO" id="GO:0042354">
    <property type="term" value="P:L-fucose metabolic process"/>
    <property type="evidence" value="ECO:0007669"/>
    <property type="project" value="UniProtKB-UniRule"/>
</dbReference>
<dbReference type="FunFam" id="3.40.1650.10:FF:000001">
    <property type="entry name" value="L-fucose mutarotase"/>
    <property type="match status" value="1"/>
</dbReference>
<dbReference type="Gene3D" id="3.40.1650.10">
    <property type="entry name" value="RbsD-like domain"/>
    <property type="match status" value="1"/>
</dbReference>
<dbReference type="HAMAP" id="MF_01662">
    <property type="entry name" value="L_fucose_rotase"/>
    <property type="match status" value="1"/>
</dbReference>
<dbReference type="InterPro" id="IPR023751">
    <property type="entry name" value="L-fucose_mutarotase"/>
</dbReference>
<dbReference type="InterPro" id="IPR023750">
    <property type="entry name" value="RbsD-like_sf"/>
</dbReference>
<dbReference type="InterPro" id="IPR050443">
    <property type="entry name" value="RbsD/FucU_mutarotase"/>
</dbReference>
<dbReference type="InterPro" id="IPR007721">
    <property type="entry name" value="RbsD_FucU"/>
</dbReference>
<dbReference type="NCBIfam" id="NF011949">
    <property type="entry name" value="PRK15420.1"/>
    <property type="match status" value="1"/>
</dbReference>
<dbReference type="PANTHER" id="PTHR31690">
    <property type="entry name" value="FUCOSE MUTAROTASE"/>
    <property type="match status" value="1"/>
</dbReference>
<dbReference type="PANTHER" id="PTHR31690:SF4">
    <property type="entry name" value="FUCOSE MUTAROTASE"/>
    <property type="match status" value="1"/>
</dbReference>
<dbReference type="Pfam" id="PF05025">
    <property type="entry name" value="RbsD_FucU"/>
    <property type="match status" value="1"/>
</dbReference>
<dbReference type="SUPFAM" id="SSF102546">
    <property type="entry name" value="RbsD-like"/>
    <property type="match status" value="1"/>
</dbReference>
<evidence type="ECO:0000255" key="1">
    <source>
        <dbReference type="HAMAP-Rule" id="MF_01662"/>
    </source>
</evidence>
<feature type="chain" id="PRO_1000187177" description="L-fucose mutarotase">
    <location>
        <begin position="1"/>
        <end position="140"/>
    </location>
</feature>
<feature type="active site" description="Proton donor" evidence="1">
    <location>
        <position position="22"/>
    </location>
</feature>
<feature type="binding site" evidence="1">
    <location>
        <position position="30"/>
    </location>
    <ligand>
        <name>substrate</name>
    </ligand>
</feature>
<feature type="binding site" evidence="1">
    <location>
        <position position="107"/>
    </location>
    <ligand>
        <name>substrate</name>
    </ligand>
</feature>
<feature type="binding site" evidence="1">
    <location>
        <begin position="129"/>
        <end position="131"/>
    </location>
    <ligand>
        <name>substrate</name>
    </ligand>
</feature>
<keyword id="KW-0119">Carbohydrate metabolism</keyword>
<keyword id="KW-0963">Cytoplasm</keyword>
<keyword id="KW-0294">Fucose metabolism</keyword>
<keyword id="KW-0413">Isomerase</keyword>
<keyword id="KW-1185">Reference proteome</keyword>
<gene>
    <name evidence="1" type="primary">fucU</name>
    <name type="ordered locus">EC55989_3083</name>
</gene>
<accession>B7LEY4</accession>
<reference key="1">
    <citation type="journal article" date="2009" name="PLoS Genet.">
        <title>Organised genome dynamics in the Escherichia coli species results in highly diverse adaptive paths.</title>
        <authorList>
            <person name="Touchon M."/>
            <person name="Hoede C."/>
            <person name="Tenaillon O."/>
            <person name="Barbe V."/>
            <person name="Baeriswyl S."/>
            <person name="Bidet P."/>
            <person name="Bingen E."/>
            <person name="Bonacorsi S."/>
            <person name="Bouchier C."/>
            <person name="Bouvet O."/>
            <person name="Calteau A."/>
            <person name="Chiapello H."/>
            <person name="Clermont O."/>
            <person name="Cruveiller S."/>
            <person name="Danchin A."/>
            <person name="Diard M."/>
            <person name="Dossat C."/>
            <person name="Karoui M.E."/>
            <person name="Frapy E."/>
            <person name="Garry L."/>
            <person name="Ghigo J.M."/>
            <person name="Gilles A.M."/>
            <person name="Johnson J."/>
            <person name="Le Bouguenec C."/>
            <person name="Lescat M."/>
            <person name="Mangenot S."/>
            <person name="Martinez-Jehanne V."/>
            <person name="Matic I."/>
            <person name="Nassif X."/>
            <person name="Oztas S."/>
            <person name="Petit M.A."/>
            <person name="Pichon C."/>
            <person name="Rouy Z."/>
            <person name="Ruf C.S."/>
            <person name="Schneider D."/>
            <person name="Tourret J."/>
            <person name="Vacherie B."/>
            <person name="Vallenet D."/>
            <person name="Medigue C."/>
            <person name="Rocha E.P.C."/>
            <person name="Denamur E."/>
        </authorList>
    </citation>
    <scope>NUCLEOTIDE SEQUENCE [LARGE SCALE GENOMIC DNA]</scope>
    <source>
        <strain>55989 / EAEC</strain>
    </source>
</reference>
<proteinExistence type="inferred from homology"/>
<sequence>MLKTISPLISPELLKVLAEMGHGDEIIFSDAHFPAHSMGPQVIRADGLLVSDLLQAIIPLFELDSYAPPLVMMAAVEGDTLDPEVERRYRNALSLQAPCPDIIRINRFAFYERAQKAFAIVITGERAKYGNILLKKGVTP</sequence>
<organism>
    <name type="scientific">Escherichia coli (strain 55989 / EAEC)</name>
    <dbReference type="NCBI Taxonomy" id="585055"/>
    <lineage>
        <taxon>Bacteria</taxon>
        <taxon>Pseudomonadati</taxon>
        <taxon>Pseudomonadota</taxon>
        <taxon>Gammaproteobacteria</taxon>
        <taxon>Enterobacterales</taxon>
        <taxon>Enterobacteriaceae</taxon>
        <taxon>Escherichia</taxon>
    </lineage>
</organism>